<feature type="chain" id="PRO_1000087282" description="Hydroxyacylglutathione hydrolase">
    <location>
        <begin position="1"/>
        <end position="257"/>
    </location>
</feature>
<feature type="binding site" evidence="1">
    <location>
        <position position="54"/>
    </location>
    <ligand>
        <name>Zn(2+)</name>
        <dbReference type="ChEBI" id="CHEBI:29105"/>
        <label>1</label>
    </ligand>
</feature>
<feature type="binding site" evidence="1">
    <location>
        <position position="56"/>
    </location>
    <ligand>
        <name>Zn(2+)</name>
        <dbReference type="ChEBI" id="CHEBI:29105"/>
        <label>1</label>
    </ligand>
</feature>
<feature type="binding site" evidence="1">
    <location>
        <position position="58"/>
    </location>
    <ligand>
        <name>Zn(2+)</name>
        <dbReference type="ChEBI" id="CHEBI:29105"/>
        <label>2</label>
    </ligand>
</feature>
<feature type="binding site" evidence="1">
    <location>
        <position position="59"/>
    </location>
    <ligand>
        <name>Zn(2+)</name>
        <dbReference type="ChEBI" id="CHEBI:29105"/>
        <label>2</label>
    </ligand>
</feature>
<feature type="binding site" evidence="1">
    <location>
        <position position="110"/>
    </location>
    <ligand>
        <name>Zn(2+)</name>
        <dbReference type="ChEBI" id="CHEBI:29105"/>
        <label>1</label>
    </ligand>
</feature>
<feature type="binding site" evidence="1">
    <location>
        <position position="131"/>
    </location>
    <ligand>
        <name>Zn(2+)</name>
        <dbReference type="ChEBI" id="CHEBI:29105"/>
        <label>1</label>
    </ligand>
</feature>
<feature type="binding site" evidence="1">
    <location>
        <position position="131"/>
    </location>
    <ligand>
        <name>Zn(2+)</name>
        <dbReference type="ChEBI" id="CHEBI:29105"/>
        <label>2</label>
    </ligand>
</feature>
<feature type="binding site" evidence="1">
    <location>
        <position position="169"/>
    </location>
    <ligand>
        <name>Zn(2+)</name>
        <dbReference type="ChEBI" id="CHEBI:29105"/>
        <label>2</label>
    </ligand>
</feature>
<organism>
    <name type="scientific">Hahella chejuensis (strain KCTC 2396)</name>
    <dbReference type="NCBI Taxonomy" id="349521"/>
    <lineage>
        <taxon>Bacteria</taxon>
        <taxon>Pseudomonadati</taxon>
        <taxon>Pseudomonadota</taxon>
        <taxon>Gammaproteobacteria</taxon>
        <taxon>Oceanospirillales</taxon>
        <taxon>Hahellaceae</taxon>
        <taxon>Hahella</taxon>
    </lineage>
</organism>
<dbReference type="EC" id="3.1.2.6" evidence="1"/>
<dbReference type="EMBL" id="CP000155">
    <property type="protein sequence ID" value="ABC29327.1"/>
    <property type="molecule type" value="Genomic_DNA"/>
</dbReference>
<dbReference type="RefSeq" id="WP_011396396.1">
    <property type="nucleotide sequence ID" value="NC_007645.1"/>
</dbReference>
<dbReference type="SMR" id="Q2SJ47"/>
<dbReference type="STRING" id="349521.HCH_02525"/>
<dbReference type="KEGG" id="hch:HCH_02525"/>
<dbReference type="eggNOG" id="COG0491">
    <property type="taxonomic scope" value="Bacteria"/>
</dbReference>
<dbReference type="HOGENOM" id="CLU_030571_4_1_6"/>
<dbReference type="OrthoDB" id="9802248at2"/>
<dbReference type="UniPathway" id="UPA00619">
    <property type="reaction ID" value="UER00676"/>
</dbReference>
<dbReference type="Proteomes" id="UP000000238">
    <property type="component" value="Chromosome"/>
</dbReference>
<dbReference type="GO" id="GO:0004416">
    <property type="term" value="F:hydroxyacylglutathione hydrolase activity"/>
    <property type="evidence" value="ECO:0007669"/>
    <property type="project" value="UniProtKB-UniRule"/>
</dbReference>
<dbReference type="GO" id="GO:0046872">
    <property type="term" value="F:metal ion binding"/>
    <property type="evidence" value="ECO:0007669"/>
    <property type="project" value="UniProtKB-KW"/>
</dbReference>
<dbReference type="GO" id="GO:0019243">
    <property type="term" value="P:methylglyoxal catabolic process to D-lactate via S-lactoyl-glutathione"/>
    <property type="evidence" value="ECO:0007669"/>
    <property type="project" value="InterPro"/>
</dbReference>
<dbReference type="CDD" id="cd07723">
    <property type="entry name" value="hydroxyacylglutathione_hydrolase_MBL-fold"/>
    <property type="match status" value="1"/>
</dbReference>
<dbReference type="Gene3D" id="3.60.15.10">
    <property type="entry name" value="Ribonuclease Z/Hydroxyacylglutathione hydrolase-like"/>
    <property type="match status" value="1"/>
</dbReference>
<dbReference type="HAMAP" id="MF_01374">
    <property type="entry name" value="Glyoxalase_2"/>
    <property type="match status" value="1"/>
</dbReference>
<dbReference type="InterPro" id="IPR035680">
    <property type="entry name" value="Clx_II_MBL"/>
</dbReference>
<dbReference type="InterPro" id="IPR050110">
    <property type="entry name" value="Glyoxalase_II_hydrolase"/>
</dbReference>
<dbReference type="InterPro" id="IPR032282">
    <property type="entry name" value="HAGH_C"/>
</dbReference>
<dbReference type="InterPro" id="IPR017782">
    <property type="entry name" value="Hydroxyacylglutathione_Hdrlase"/>
</dbReference>
<dbReference type="InterPro" id="IPR001279">
    <property type="entry name" value="Metallo-B-lactamas"/>
</dbReference>
<dbReference type="InterPro" id="IPR036866">
    <property type="entry name" value="RibonucZ/Hydroxyglut_hydro"/>
</dbReference>
<dbReference type="NCBIfam" id="TIGR03413">
    <property type="entry name" value="GSH_gloB"/>
    <property type="match status" value="1"/>
</dbReference>
<dbReference type="PANTHER" id="PTHR43705">
    <property type="entry name" value="HYDROXYACYLGLUTATHIONE HYDROLASE"/>
    <property type="match status" value="1"/>
</dbReference>
<dbReference type="PANTHER" id="PTHR43705:SF1">
    <property type="entry name" value="HYDROXYACYLGLUTATHIONE HYDROLASE GLOB"/>
    <property type="match status" value="1"/>
</dbReference>
<dbReference type="Pfam" id="PF16123">
    <property type="entry name" value="HAGH_C"/>
    <property type="match status" value="1"/>
</dbReference>
<dbReference type="Pfam" id="PF00753">
    <property type="entry name" value="Lactamase_B"/>
    <property type="match status" value="1"/>
</dbReference>
<dbReference type="PIRSF" id="PIRSF005457">
    <property type="entry name" value="Glx"/>
    <property type="match status" value="1"/>
</dbReference>
<dbReference type="SMART" id="SM00849">
    <property type="entry name" value="Lactamase_B"/>
    <property type="match status" value="1"/>
</dbReference>
<dbReference type="SUPFAM" id="SSF56281">
    <property type="entry name" value="Metallo-hydrolase/oxidoreductase"/>
    <property type="match status" value="1"/>
</dbReference>
<sequence>MTEILPIPAFNDNYIWSIQSDQGDAWVVDPGDAQPVLRHLAENHLTLRGILITHHHHDHTGGVNELLANHPVPVYGFMRSAIKAITVPLQEGDRVDLGDFSLEVLETPGHTLDHISYFGDIAGAPRLFCGDTLFSAGCGRLFEGDPAMMRQSLDKLKRLPGDTYIYCAHEYTLSNLRFAQAVMPESDEVNKRKLQCESLRARGVPTLPAVLGEEIAYNPFLMAEHPVVRRMAQEVSGSPCATATDTFAAIRAWKDRF</sequence>
<evidence type="ECO:0000255" key="1">
    <source>
        <dbReference type="HAMAP-Rule" id="MF_01374"/>
    </source>
</evidence>
<reference key="1">
    <citation type="journal article" date="2005" name="Nucleic Acids Res.">
        <title>Genomic blueprint of Hahella chejuensis, a marine microbe producing an algicidal agent.</title>
        <authorList>
            <person name="Jeong H."/>
            <person name="Yim J.H."/>
            <person name="Lee C."/>
            <person name="Choi S.-H."/>
            <person name="Park Y.K."/>
            <person name="Yoon S.H."/>
            <person name="Hur C.-G."/>
            <person name="Kang H.-Y."/>
            <person name="Kim D."/>
            <person name="Lee H.H."/>
            <person name="Park K.H."/>
            <person name="Park S.-H."/>
            <person name="Park H.-S."/>
            <person name="Lee H.K."/>
            <person name="Oh T.K."/>
            <person name="Kim J.F."/>
        </authorList>
    </citation>
    <scope>NUCLEOTIDE SEQUENCE [LARGE SCALE GENOMIC DNA]</scope>
    <source>
        <strain>KCTC 2396</strain>
    </source>
</reference>
<protein>
    <recommendedName>
        <fullName evidence="1">Hydroxyacylglutathione hydrolase</fullName>
        <ecNumber evidence="1">3.1.2.6</ecNumber>
    </recommendedName>
    <alternativeName>
        <fullName evidence="1">Glyoxalase II</fullName>
        <shortName evidence="1">Glx II</shortName>
    </alternativeName>
</protein>
<accession>Q2SJ47</accession>
<name>GLO2_HAHCH</name>
<gene>
    <name evidence="1" type="primary">gloB</name>
    <name type="ordered locus">HCH_02525</name>
</gene>
<proteinExistence type="inferred from homology"/>
<keyword id="KW-0378">Hydrolase</keyword>
<keyword id="KW-0479">Metal-binding</keyword>
<keyword id="KW-1185">Reference proteome</keyword>
<keyword id="KW-0862">Zinc</keyword>
<comment type="function">
    <text evidence="1">Thiolesterase that catalyzes the hydrolysis of S-D-lactoyl-glutathione to form glutathione and D-lactic acid.</text>
</comment>
<comment type="catalytic activity">
    <reaction evidence="1">
        <text>an S-(2-hydroxyacyl)glutathione + H2O = a 2-hydroxy carboxylate + glutathione + H(+)</text>
        <dbReference type="Rhea" id="RHEA:21864"/>
        <dbReference type="ChEBI" id="CHEBI:15377"/>
        <dbReference type="ChEBI" id="CHEBI:15378"/>
        <dbReference type="ChEBI" id="CHEBI:57925"/>
        <dbReference type="ChEBI" id="CHEBI:58896"/>
        <dbReference type="ChEBI" id="CHEBI:71261"/>
        <dbReference type="EC" id="3.1.2.6"/>
    </reaction>
</comment>
<comment type="cofactor">
    <cofactor evidence="1">
        <name>Zn(2+)</name>
        <dbReference type="ChEBI" id="CHEBI:29105"/>
    </cofactor>
    <text evidence="1">Binds 2 Zn(2+) ions per subunit.</text>
</comment>
<comment type="pathway">
    <text evidence="1">Secondary metabolite metabolism; methylglyoxal degradation; (R)-lactate from methylglyoxal: step 2/2.</text>
</comment>
<comment type="subunit">
    <text evidence="1">Monomer.</text>
</comment>
<comment type="similarity">
    <text evidence="1">Belongs to the metallo-beta-lactamase superfamily. Glyoxalase II family.</text>
</comment>